<organism>
    <name type="scientific">Saccharomyces cerevisiae (strain ATCC 204508 / S288c)</name>
    <name type="common">Baker's yeast</name>
    <dbReference type="NCBI Taxonomy" id="559292"/>
    <lineage>
        <taxon>Eukaryota</taxon>
        <taxon>Fungi</taxon>
        <taxon>Dikarya</taxon>
        <taxon>Ascomycota</taxon>
        <taxon>Saccharomycotina</taxon>
        <taxon>Saccharomycetes</taxon>
        <taxon>Saccharomycetales</taxon>
        <taxon>Saccharomycetaceae</taxon>
        <taxon>Saccharomyces</taxon>
    </lineage>
</organism>
<keyword id="KW-0002">3D-structure</keyword>
<keyword id="KW-0007">Acetylation</keyword>
<keyword id="KW-0010">Activator</keyword>
<keyword id="KW-0156">Chromatin regulator</keyword>
<keyword id="KW-0227">DNA damage</keyword>
<keyword id="KW-0234">DNA repair</keyword>
<keyword id="KW-0597">Phosphoprotein</keyword>
<keyword id="KW-1185">Reference proteome</keyword>
<keyword id="KW-0804">Transcription</keyword>
<keyword id="KW-0805">Transcription regulation</keyword>
<keyword id="KW-0808">Transferase</keyword>
<accession>Q08649</accession>
<accession>D6W2U6</accession>
<sequence length="445" mass="52613">MSHDGKEEPGIAKKINSVDDIIIKCQCWVQKNDEERLAEILSINTRKAPPKFYVHYVNYNKRLDEWITTDRINLDKEVLYPKLKATDEDNKKQKKKKATNTSETPQDSLQDGVDGFSRENTDVMDLDNLNVQGIKDENISHEDEIKKLRTSGSMTQNPHEVARVRNLNRIIMGKYEIEPWYFSPYPIELTDEDFIYIDDFTLQYFGSKKQYERYRKKCTLRHPPGNEIYRDDYVSFFEIDGRKQRTWCRNLCLLSKLFLDHKTLYYDVDPFLFYCMTRRDELGHHLVGYFSKEKESADGYNVACILTLPQYQRMGYGKLLIEFSYELSKKENKVGSPEKPLSDLGLLSYRAYWSDTLITLLVEHQKEITIDEISSMTSMTTTDILHTAKTLNILRYYKGQHIIFLNEDILDRYNRLKAKKRRTIDPNRLIWKPPVFTASQLRFAW</sequence>
<comment type="function">
    <text evidence="5 7 8 11 13 15 16 18 19 21 23 24 26 27 28 29 30">Catalytic component of the NuA4 histone acetyltransferase (HAT), a multiprotein complex involved in epigenetic transcriptional activation of selected genes principally by acetylation of nucleosomal histones H4, H3, H2B, H2A and H2A variant H2A.Z (PubMed:10082517, PubMed:10835360, PubMed:10911987, PubMed:12353039, PubMed:12379856, PubMed:15045029, PubMed:15175650, PubMed:15494307, PubMed:15923609, PubMed:16543223, PubMed:18245364, PubMed:9520405, PubMed:9858608). Acetylates histone H4 to form H4K5ac, H4K8ac, H4K12ac and H4K16ac, histone H3 to form H3K14ac, histone H2B to form H2BK16ac, histone H2A to form H2AK4ac and H2AK7ac, and histone variant H2A.Z to form H2A.ZK14ac (PubMed:10082517, PubMed:10835360, PubMed:10911987, PubMed:12353039, PubMed:15045029, PubMed:15175650, PubMed:15494307, PubMed:15923609, PubMed:18245364, PubMed:9858608). Acetylation of histones gives a specific tag for epigenetic transcription initiation and elongation (PubMed:16543223, PubMed:19822662). Acetylation of histone H4 is essential for DNA double-strand break repair through homologous recombination (PubMed:10082517, PubMed:10835360, PubMed:10911987, PubMed:12353039, PubMed:15045029, PubMed:15175650, PubMed:15494307, PubMed:15923609, PubMed:18245364, PubMed:9858608). Involved in cell cycle progression (PubMed:10082517, PubMed:10835360, PubMed:10911987, PubMed:12353039, PubMed:15045029, PubMed:15175650, PubMed:15494307, PubMed:15923609, PubMed:18245364, PubMed:9858608). Recruitment to promoters depends on H3K4me (PubMed:10082517, PubMed:10835360, PubMed:10911987, PubMed:12353039, PubMed:15045029, PubMed:15175650, PubMed:15494307, PubMed:15923609, PubMed:18245364, PubMed:9858608). Also acetylates non-histone proteins, such as ATG3 and PAH1 (PubMed:22539722, PubMed:29765047). Regulates autophagy by acetylating ATG3, controlling interaction the interaction between ATG3 and ATG8 and ATG8 lipidation (PubMed:22539722). Acts as a regulator of fatty-acid-induced triacylglycerol synthesis by catalyzing acetylation of PAH1, thereby promoting the synthesis of diacylglycerol (PubMed:29765047). In addition to protein acetyltransferase, can use different acyl-CoA substrates, such as 2-hydroxyisobutanoyl-CoA (2-hydroxyisobutyryl-CoA) or (2E)-butenoyl-CoA (crotonyl-CoA), and is able to mediate protein 2-hydroxyisobutyrylation and crotonylation, respectively (PubMed:31699900). Catalyzes histone crotonylation (PubMed:31699900).</text>
</comment>
<comment type="catalytic activity">
    <reaction evidence="12 22 23 25 29">
        <text>L-lysyl-[histone] + acetyl-CoA = N(6)-acetyl-L-lysyl-[histone] + CoA + H(+)</text>
        <dbReference type="Rhea" id="RHEA:21992"/>
        <dbReference type="Rhea" id="RHEA-COMP:9845"/>
        <dbReference type="Rhea" id="RHEA-COMP:11338"/>
        <dbReference type="ChEBI" id="CHEBI:15378"/>
        <dbReference type="ChEBI" id="CHEBI:29969"/>
        <dbReference type="ChEBI" id="CHEBI:57287"/>
        <dbReference type="ChEBI" id="CHEBI:57288"/>
        <dbReference type="ChEBI" id="CHEBI:61930"/>
        <dbReference type="EC" id="2.3.1.48"/>
    </reaction>
    <physiologicalReaction direction="left-to-right" evidence="12 22 23 25 29">
        <dbReference type="Rhea" id="RHEA:21993"/>
    </physiologicalReaction>
</comment>
<comment type="catalytic activity">
    <reaction evidence="26 27">
        <text>L-lysyl-[protein] + acetyl-CoA = N(6)-acetyl-L-lysyl-[protein] + CoA + H(+)</text>
        <dbReference type="Rhea" id="RHEA:45948"/>
        <dbReference type="Rhea" id="RHEA-COMP:9752"/>
        <dbReference type="Rhea" id="RHEA-COMP:10731"/>
        <dbReference type="ChEBI" id="CHEBI:15378"/>
        <dbReference type="ChEBI" id="CHEBI:29969"/>
        <dbReference type="ChEBI" id="CHEBI:57287"/>
        <dbReference type="ChEBI" id="CHEBI:57288"/>
        <dbReference type="ChEBI" id="CHEBI:61930"/>
    </reaction>
    <physiologicalReaction direction="left-to-right" evidence="26 27">
        <dbReference type="Rhea" id="RHEA:45949"/>
    </physiologicalReaction>
</comment>
<comment type="catalytic activity">
    <reaction evidence="1">
        <text>2-hydroxyisobutanoyl-CoA + L-lysyl-[protein] = N(6)-(2-hydroxyisobutanoyl)-L-lysyl-[protein] + CoA + H(+)</text>
        <dbReference type="Rhea" id="RHEA:24180"/>
        <dbReference type="Rhea" id="RHEA-COMP:9752"/>
        <dbReference type="Rhea" id="RHEA-COMP:15921"/>
        <dbReference type="ChEBI" id="CHEBI:15378"/>
        <dbReference type="ChEBI" id="CHEBI:29969"/>
        <dbReference type="ChEBI" id="CHEBI:57287"/>
        <dbReference type="ChEBI" id="CHEBI:131780"/>
        <dbReference type="ChEBI" id="CHEBI:144968"/>
    </reaction>
    <physiologicalReaction direction="left-to-right" evidence="1">
        <dbReference type="Rhea" id="RHEA:24181"/>
    </physiologicalReaction>
</comment>
<comment type="catalytic activity">
    <reaction evidence="28">
        <text>(2E)-butenoyl-CoA + L-lysyl-[protein] = N(6)-(2E)-butenoyl-L-lysyl-[protein] + CoA + H(+)</text>
        <dbReference type="Rhea" id="RHEA:53908"/>
        <dbReference type="Rhea" id="RHEA-COMP:9752"/>
        <dbReference type="Rhea" id="RHEA-COMP:13707"/>
        <dbReference type="ChEBI" id="CHEBI:15378"/>
        <dbReference type="ChEBI" id="CHEBI:29969"/>
        <dbReference type="ChEBI" id="CHEBI:57287"/>
        <dbReference type="ChEBI" id="CHEBI:57332"/>
        <dbReference type="ChEBI" id="CHEBI:137954"/>
    </reaction>
    <physiologicalReaction direction="left-to-right" evidence="28">
        <dbReference type="Rhea" id="RHEA:53909"/>
    </physiologicalReaction>
</comment>
<comment type="subunit">
    <text evidence="6 8 9 12 15 17">Component of the NuA4 histone acetyltransferase complex composed of at least ACT1, ARP4, EAF3, EAF5, EAF6, EAF7, EPL1, ESA1, SWC4, TRA1, VID21, YAF9 and YNG2. The complex interacts with histones H4 (HHF1 and HHF2), H3 (HHT1 and HHT2) and H2A (HTA1 and HTA2).</text>
</comment>
<comment type="interaction">
    <interactant intactId="EBI-6648">
        <id>Q08649</id>
    </interactant>
    <interactant intactId="EBI-2939">
        <id>P80428</id>
        <label>ARP4</label>
    </interactant>
    <organismsDiffer>false</organismsDiffer>
    <experiments>10</experiments>
</comment>
<comment type="interaction">
    <interactant intactId="EBI-6648">
        <id>Q08649</id>
    </interactant>
    <interactant intactId="EBI-6281">
        <id>Q12432</id>
        <label>EAF3</label>
    </interactant>
    <organismsDiffer>false</organismsDiffer>
    <experiments>12</experiments>
</comment>
<comment type="interaction">
    <interactant intactId="EBI-6648">
        <id>Q08649</id>
    </interactant>
    <interactant intactId="EBI-8113">
        <id>P02309</id>
        <label>HHF2</label>
    </interactant>
    <organismsDiffer>false</organismsDiffer>
    <experiments>5</experiments>
</comment>
<comment type="interaction">
    <interactant intactId="EBI-6648">
        <id>Q08649</id>
    </interactant>
    <interactant intactId="EBI-14821">
        <id>P11938</id>
        <label>RAP1</label>
    </interactant>
    <organismsDiffer>false</organismsDiffer>
    <experiments>6</experiments>
</comment>
<comment type="interaction">
    <interactant intactId="EBI-6648">
        <id>Q08649</id>
    </interactant>
    <interactant intactId="EBI-24638">
        <id>P38811</id>
        <label>TRA1</label>
    </interactant>
    <organismsDiffer>false</organismsDiffer>
    <experiments>11</experiments>
</comment>
<comment type="domain">
    <text evidence="10 20">The ESA1-RPD3 motif is common to ESA1 and RPD3 and is required for ESA1 histone acetyl-transferase (HAT) activity and RPD3 histone deacetylase (HDAC) activity.</text>
</comment>
<comment type="PTM">
    <text evidence="25">Autoacetylation at Lys-262 is required for proper function.</text>
</comment>
<comment type="miscellaneous">
    <text evidence="14">Present with 1170 molecules/cell in log phase SD medium.</text>
</comment>
<comment type="similarity">
    <text evidence="36">Belongs to the MYST (SAS/MOZ) family.</text>
</comment>
<comment type="caution">
    <text evidence="36">The catalytic mechanisms is still under debate. Cys-304 was proposed to function as a nucleophile that forms a covalent intermediate with acetyl-CoA during the reaction (PubMed:12368900), and indeed the residue can be acetylated (in vitro) (PubMed:12368900, PubMed:17223684). Depending on the assay system, mutation of Cys-304 leads to reduced or undetectable activity, indicating that is plays an important role. Still, mutation of Cys-304 has only a minor effect on the catalytic activity of the NuA4 histone acetyltransferase (HAT) complex (PubMed:17223684), making it unlikely that this residue functions as the catalytic nucleophile.</text>
</comment>
<proteinExistence type="evidence at protein level"/>
<dbReference type="EC" id="2.3.1.48" evidence="12 22 23 25 29"/>
<dbReference type="EC" id="2.3.1.-" evidence="1 26 27 28"/>
<dbReference type="EMBL" id="Z75152">
    <property type="protein sequence ID" value="CAA99465.1"/>
    <property type="molecule type" value="Genomic_DNA"/>
</dbReference>
<dbReference type="EMBL" id="BK006948">
    <property type="protein sequence ID" value="DAA11012.1"/>
    <property type="molecule type" value="Genomic_DNA"/>
</dbReference>
<dbReference type="PIR" id="S67137">
    <property type="entry name" value="S67137"/>
</dbReference>
<dbReference type="RefSeq" id="NP_014887.3">
    <property type="nucleotide sequence ID" value="NM_001183663.3"/>
</dbReference>
<dbReference type="PDB" id="1FY7">
    <property type="method" value="X-ray"/>
    <property type="resolution" value="2.00 A"/>
    <property type="chains" value="A=160-435"/>
</dbReference>
<dbReference type="PDB" id="1MJ9">
    <property type="method" value="X-ray"/>
    <property type="resolution" value="2.50 A"/>
    <property type="chains" value="A=160-435"/>
</dbReference>
<dbReference type="PDB" id="1MJA">
    <property type="method" value="X-ray"/>
    <property type="resolution" value="2.26 A"/>
    <property type="chains" value="A=160-435"/>
</dbReference>
<dbReference type="PDB" id="1MJB">
    <property type="method" value="X-ray"/>
    <property type="resolution" value="2.50 A"/>
    <property type="chains" value="A=160-435"/>
</dbReference>
<dbReference type="PDB" id="2RNZ">
    <property type="method" value="NMR"/>
    <property type="chains" value="A=17-89"/>
</dbReference>
<dbReference type="PDB" id="2RO0">
    <property type="method" value="NMR"/>
    <property type="chains" value="A=1-89"/>
</dbReference>
<dbReference type="PDB" id="3TO6">
    <property type="method" value="X-ray"/>
    <property type="resolution" value="2.10 A"/>
    <property type="chains" value="A=160-435"/>
</dbReference>
<dbReference type="PDB" id="3TO7">
    <property type="method" value="X-ray"/>
    <property type="resolution" value="1.90 A"/>
    <property type="chains" value="A=160-435"/>
</dbReference>
<dbReference type="PDB" id="3TO9">
    <property type="method" value="X-ray"/>
    <property type="resolution" value="2.00 A"/>
    <property type="chains" value="A=160-435"/>
</dbReference>
<dbReference type="PDB" id="5J9Q">
    <property type="method" value="X-ray"/>
    <property type="resolution" value="3.25 A"/>
    <property type="chains" value="A/E/I=141-445"/>
</dbReference>
<dbReference type="PDB" id="5J9T">
    <property type="method" value="X-ray"/>
    <property type="resolution" value="2.70 A"/>
    <property type="chains" value="A/E/I=141-445"/>
</dbReference>
<dbReference type="PDB" id="5J9U">
    <property type="method" value="X-ray"/>
    <property type="resolution" value="2.95 A"/>
    <property type="chains" value="A/E/I=141-445"/>
</dbReference>
<dbReference type="PDB" id="5J9W">
    <property type="method" value="X-ray"/>
    <property type="resolution" value="2.80 A"/>
    <property type="chains" value="A/E/I=141-445"/>
</dbReference>
<dbReference type="PDB" id="7VVU">
    <property type="method" value="EM"/>
    <property type="resolution" value="3.40 A"/>
    <property type="chains" value="P=1-445"/>
</dbReference>
<dbReference type="PDB" id="7VVZ">
    <property type="method" value="EM"/>
    <property type="resolution" value="8.80 A"/>
    <property type="chains" value="P=1-445"/>
</dbReference>
<dbReference type="PDBsum" id="1FY7"/>
<dbReference type="PDBsum" id="1MJ9"/>
<dbReference type="PDBsum" id="1MJA"/>
<dbReference type="PDBsum" id="1MJB"/>
<dbReference type="PDBsum" id="2RNZ"/>
<dbReference type="PDBsum" id="2RO0"/>
<dbReference type="PDBsum" id="3TO6"/>
<dbReference type="PDBsum" id="3TO7"/>
<dbReference type="PDBsum" id="3TO9"/>
<dbReference type="PDBsum" id="5J9Q"/>
<dbReference type="PDBsum" id="5J9T"/>
<dbReference type="PDBsum" id="5J9U"/>
<dbReference type="PDBsum" id="5J9W"/>
<dbReference type="PDBsum" id="7VVU"/>
<dbReference type="PDBsum" id="7VVZ"/>
<dbReference type="BMRB" id="Q08649"/>
<dbReference type="EMDB" id="EMD-32150"/>
<dbReference type="SMR" id="Q08649"/>
<dbReference type="BioGRID" id="34635">
    <property type="interactions" value="945"/>
</dbReference>
<dbReference type="ComplexPortal" id="CPX-3155">
    <property type="entry name" value="NuA4 histone acetyltransferase complex"/>
</dbReference>
<dbReference type="ComplexPortal" id="CPX-3185">
    <property type="entry name" value="Piccolo NuA4 histone acetyltransferase complex"/>
</dbReference>
<dbReference type="DIP" id="DIP-4115N"/>
<dbReference type="FunCoup" id="Q08649">
    <property type="interactions" value="1137"/>
</dbReference>
<dbReference type="IntAct" id="Q08649">
    <property type="interactions" value="43"/>
</dbReference>
<dbReference type="MINT" id="Q08649"/>
<dbReference type="STRING" id="4932.YOR244W"/>
<dbReference type="ChEMBL" id="CHEMBL3832954"/>
<dbReference type="GlyGen" id="Q08649">
    <property type="glycosylation" value="1 site, 1 O-linked glycan (1 site)"/>
</dbReference>
<dbReference type="iPTMnet" id="Q08649"/>
<dbReference type="PaxDb" id="4932-YOR244W"/>
<dbReference type="PeptideAtlas" id="Q08649"/>
<dbReference type="EnsemblFungi" id="YOR244W_mRNA">
    <property type="protein sequence ID" value="YOR244W"/>
    <property type="gene ID" value="YOR244W"/>
</dbReference>
<dbReference type="GeneID" id="854418"/>
<dbReference type="KEGG" id="sce:YOR244W"/>
<dbReference type="AGR" id="SGD:S000005770"/>
<dbReference type="SGD" id="S000005770">
    <property type="gene designation" value="ESA1"/>
</dbReference>
<dbReference type="VEuPathDB" id="FungiDB:YOR244W"/>
<dbReference type="eggNOG" id="KOG2747">
    <property type="taxonomic scope" value="Eukaryota"/>
</dbReference>
<dbReference type="GeneTree" id="ENSGT00940000174488"/>
<dbReference type="HOGENOM" id="CLU_011815_2_0_1"/>
<dbReference type="InParanoid" id="Q08649"/>
<dbReference type="OMA" id="QYQRHGY"/>
<dbReference type="OrthoDB" id="787137at2759"/>
<dbReference type="BioCyc" id="YEAST:G3O-33738-MONOMER"/>
<dbReference type="BRENDA" id="2.3.1.48">
    <property type="organism ID" value="984"/>
</dbReference>
<dbReference type="Reactome" id="R-SCE-2559586">
    <property type="pathway name" value="DNA Damage/Telomere Stress Induced Senescence"/>
</dbReference>
<dbReference type="Reactome" id="R-SCE-5693548">
    <property type="pathway name" value="Sensing of DNA Double Strand Breaks"/>
</dbReference>
<dbReference type="Reactome" id="R-SCE-5693565">
    <property type="pathway name" value="Recruitment and ATM-mediated phosphorylation of repair and signaling proteins at DNA double strand breaks"/>
</dbReference>
<dbReference type="Reactome" id="R-SCE-9018519">
    <property type="pathway name" value="Estrogen-dependent gene expression"/>
</dbReference>
<dbReference type="BioGRID-ORCS" id="854418">
    <property type="hits" value="5 hits in 10 CRISPR screens"/>
</dbReference>
<dbReference type="EvolutionaryTrace" id="Q08649"/>
<dbReference type="PRO" id="PR:Q08649"/>
<dbReference type="Proteomes" id="UP000002311">
    <property type="component" value="Chromosome XV"/>
</dbReference>
<dbReference type="RNAct" id="Q08649">
    <property type="molecule type" value="protein"/>
</dbReference>
<dbReference type="GO" id="GO:0000785">
    <property type="term" value="C:chromatin"/>
    <property type="evidence" value="ECO:0000314"/>
    <property type="project" value="SGD"/>
</dbReference>
<dbReference type="GO" id="GO:0035267">
    <property type="term" value="C:NuA4 histone acetyltransferase complex"/>
    <property type="evidence" value="ECO:0000314"/>
    <property type="project" value="SGD"/>
</dbReference>
<dbReference type="GO" id="GO:0000786">
    <property type="term" value="C:nucleosome"/>
    <property type="evidence" value="ECO:0000314"/>
    <property type="project" value="ComplexPortal"/>
</dbReference>
<dbReference type="GO" id="GO:0005634">
    <property type="term" value="C:nucleus"/>
    <property type="evidence" value="ECO:0000318"/>
    <property type="project" value="GO_Central"/>
</dbReference>
<dbReference type="GO" id="GO:0032777">
    <property type="term" value="C:piccolo histone acetyltransferase complex"/>
    <property type="evidence" value="ECO:0000314"/>
    <property type="project" value="SGD"/>
</dbReference>
<dbReference type="GO" id="GO:0003682">
    <property type="term" value="F:chromatin binding"/>
    <property type="evidence" value="ECO:0000318"/>
    <property type="project" value="GO_Central"/>
</dbReference>
<dbReference type="GO" id="GO:0004402">
    <property type="term" value="F:histone acetyltransferase activity"/>
    <property type="evidence" value="ECO:0000314"/>
    <property type="project" value="SGD"/>
</dbReference>
<dbReference type="GO" id="GO:0140068">
    <property type="term" value="F:histone crotonyltransferase activity"/>
    <property type="evidence" value="ECO:0000314"/>
    <property type="project" value="SGD"/>
</dbReference>
<dbReference type="GO" id="GO:0010485">
    <property type="term" value="F:histone H4 acetyltransferase activity"/>
    <property type="evidence" value="ECO:0000314"/>
    <property type="project" value="SGD"/>
</dbReference>
<dbReference type="GO" id="GO:0106226">
    <property type="term" value="F:peptide 2-hydroxyisobutyryltransferase activity"/>
    <property type="evidence" value="ECO:0007669"/>
    <property type="project" value="RHEA"/>
</dbReference>
<dbReference type="GO" id="GO:0061733">
    <property type="term" value="F:protein-lysine-acetyltransferase activity"/>
    <property type="evidence" value="ECO:0000314"/>
    <property type="project" value="UniProtKB"/>
</dbReference>
<dbReference type="GO" id="GO:0003712">
    <property type="term" value="F:transcription coregulator activity"/>
    <property type="evidence" value="ECO:0000314"/>
    <property type="project" value="SGD"/>
</dbReference>
<dbReference type="GO" id="GO:0006281">
    <property type="term" value="P:DNA repair"/>
    <property type="evidence" value="ECO:0000314"/>
    <property type="project" value="SGD"/>
</dbReference>
<dbReference type="GO" id="GO:0006351">
    <property type="term" value="P:DNA-templated transcription"/>
    <property type="evidence" value="ECO:0000303"/>
    <property type="project" value="ComplexPortal"/>
</dbReference>
<dbReference type="GO" id="GO:0006354">
    <property type="term" value="P:DNA-templated transcription elongation"/>
    <property type="evidence" value="ECO:0000314"/>
    <property type="project" value="SGD"/>
</dbReference>
<dbReference type="GO" id="GO:0016239">
    <property type="term" value="P:positive regulation of macroautophagy"/>
    <property type="evidence" value="ECO:0000315"/>
    <property type="project" value="SGD"/>
</dbReference>
<dbReference type="GO" id="GO:0032968">
    <property type="term" value="P:positive regulation of transcription elongation by RNA polymerase II"/>
    <property type="evidence" value="ECO:0000315"/>
    <property type="project" value="SGD"/>
</dbReference>
<dbReference type="GO" id="GO:0010867">
    <property type="term" value="P:positive regulation of triglyceride biosynthetic process"/>
    <property type="evidence" value="ECO:0000314"/>
    <property type="project" value="UniProtKB"/>
</dbReference>
<dbReference type="GO" id="GO:0000183">
    <property type="term" value="P:rDNA heterochromatin formation"/>
    <property type="evidence" value="ECO:0000315"/>
    <property type="project" value="SGD"/>
</dbReference>
<dbReference type="GO" id="GO:0051726">
    <property type="term" value="P:regulation of cell cycle"/>
    <property type="evidence" value="ECO:0000315"/>
    <property type="project" value="SGD"/>
</dbReference>
<dbReference type="GO" id="GO:0006357">
    <property type="term" value="P:regulation of transcription by RNA polymerase II"/>
    <property type="evidence" value="ECO:0000315"/>
    <property type="project" value="SGD"/>
</dbReference>
<dbReference type="CDD" id="cd18986">
    <property type="entry name" value="CBD_ESA1_like"/>
    <property type="match status" value="1"/>
</dbReference>
<dbReference type="CDD" id="cd04301">
    <property type="entry name" value="NAT_SF"/>
    <property type="match status" value="1"/>
</dbReference>
<dbReference type="FunFam" id="1.10.10.10:FF:000526">
    <property type="entry name" value="Histone acetyltransferase"/>
    <property type="match status" value="1"/>
</dbReference>
<dbReference type="FunFam" id="2.30.30.140:FF:000131">
    <property type="entry name" value="Histone acetyltransferase"/>
    <property type="match status" value="1"/>
</dbReference>
<dbReference type="FunFam" id="3.30.60.60:FF:000001">
    <property type="entry name" value="Histone acetyltransferase"/>
    <property type="match status" value="1"/>
</dbReference>
<dbReference type="FunFam" id="3.40.630.30:FF:000002">
    <property type="entry name" value="Histone acetyltransferase"/>
    <property type="match status" value="1"/>
</dbReference>
<dbReference type="Gene3D" id="2.30.30.140">
    <property type="match status" value="1"/>
</dbReference>
<dbReference type="Gene3D" id="3.40.630.30">
    <property type="match status" value="1"/>
</dbReference>
<dbReference type="Gene3D" id="3.30.60.60">
    <property type="entry name" value="N-acetyl transferase-like"/>
    <property type="match status" value="1"/>
</dbReference>
<dbReference type="Gene3D" id="1.10.10.10">
    <property type="entry name" value="Winged helix-like DNA-binding domain superfamily/Winged helix DNA-binding domain"/>
    <property type="match status" value="1"/>
</dbReference>
<dbReference type="InterPro" id="IPR016181">
    <property type="entry name" value="Acyl_CoA_acyltransferase"/>
</dbReference>
<dbReference type="InterPro" id="IPR016197">
    <property type="entry name" value="Chromo-like_dom_sf"/>
</dbReference>
<dbReference type="InterPro" id="IPR000953">
    <property type="entry name" value="Chromo/chromo_shadow_dom"/>
</dbReference>
<dbReference type="InterPro" id="IPR002717">
    <property type="entry name" value="HAT_MYST-type"/>
</dbReference>
<dbReference type="InterPro" id="IPR050603">
    <property type="entry name" value="MYST_HAT"/>
</dbReference>
<dbReference type="InterPro" id="IPR025995">
    <property type="entry name" value="Tudor-knot"/>
</dbReference>
<dbReference type="InterPro" id="IPR036388">
    <property type="entry name" value="WH-like_DNA-bd_sf"/>
</dbReference>
<dbReference type="InterPro" id="IPR040706">
    <property type="entry name" value="Zf-MYST"/>
</dbReference>
<dbReference type="PANTHER" id="PTHR10615">
    <property type="entry name" value="HISTONE ACETYLTRANSFERASE"/>
    <property type="match status" value="1"/>
</dbReference>
<dbReference type="PANTHER" id="PTHR10615:SF218">
    <property type="entry name" value="HISTONE ACETYLTRANSFERASE ESA1"/>
    <property type="match status" value="1"/>
</dbReference>
<dbReference type="Pfam" id="PF01853">
    <property type="entry name" value="MOZ_SAS"/>
    <property type="match status" value="1"/>
</dbReference>
<dbReference type="Pfam" id="PF11717">
    <property type="entry name" value="Tudor-knot"/>
    <property type="match status" value="1"/>
</dbReference>
<dbReference type="Pfam" id="PF17772">
    <property type="entry name" value="zf-MYST"/>
    <property type="match status" value="1"/>
</dbReference>
<dbReference type="SMART" id="SM00298">
    <property type="entry name" value="CHROMO"/>
    <property type="match status" value="1"/>
</dbReference>
<dbReference type="SUPFAM" id="SSF55729">
    <property type="entry name" value="Acyl-CoA N-acyltransferases (Nat)"/>
    <property type="match status" value="1"/>
</dbReference>
<dbReference type="SUPFAM" id="SSF54160">
    <property type="entry name" value="Chromo domain-like"/>
    <property type="match status" value="1"/>
</dbReference>
<dbReference type="PROSITE" id="PS51726">
    <property type="entry name" value="MYST_HAT"/>
    <property type="match status" value="1"/>
</dbReference>
<name>ESA1_YEAST</name>
<feature type="chain" id="PRO_0000051562" description="Histone acetyltransferase ESA1">
    <location>
        <begin position="1"/>
        <end position="445"/>
    </location>
</feature>
<feature type="domain" description="Tudor-knot" evidence="2">
    <location>
        <begin position="22"/>
        <end position="74"/>
    </location>
</feature>
<feature type="domain" description="MYST-type HAT" evidence="3">
    <location>
        <begin position="162"/>
        <end position="433"/>
    </location>
</feature>
<feature type="zinc finger region" description="C2HC MYST-type; degenerate" evidence="3">
    <location>
        <begin position="195"/>
        <end position="220"/>
    </location>
</feature>
<feature type="region of interest" description="Disordered" evidence="4">
    <location>
        <begin position="88"/>
        <end position="114"/>
    </location>
</feature>
<feature type="short sequence motif" description="ESA1-RPD3 motif">
    <location>
        <begin position="245"/>
        <end position="266"/>
    </location>
</feature>
<feature type="compositionally biased region" description="Polar residues" evidence="4">
    <location>
        <begin position="99"/>
        <end position="109"/>
    </location>
</feature>
<feature type="active site" description="Proton donor/acceptor" evidence="31 32 33 34 36">
    <location>
        <position position="338"/>
    </location>
</feature>
<feature type="binding site" evidence="9 12 25">
    <location>
        <begin position="303"/>
        <end position="307"/>
    </location>
    <ligand>
        <name>acetyl-CoA</name>
        <dbReference type="ChEBI" id="CHEBI:57288"/>
    </ligand>
</feature>
<feature type="binding site" evidence="9 12 25">
    <location>
        <begin position="312"/>
        <end position="318"/>
    </location>
    <ligand>
        <name>acetyl-CoA</name>
        <dbReference type="ChEBI" id="CHEBI:57288"/>
    </ligand>
</feature>
<feature type="binding site" evidence="9 12 25">
    <location>
        <position position="342"/>
    </location>
    <ligand>
        <name>acetyl-CoA</name>
        <dbReference type="ChEBI" id="CHEBI:57288"/>
    </ligand>
</feature>
<feature type="site" description="Important for catalytic activity" evidence="36">
    <location>
        <position position="304"/>
    </location>
</feature>
<feature type="modified residue" description="Phosphoserine" evidence="38">
    <location>
        <position position="17"/>
    </location>
</feature>
<feature type="modified residue" description="N6-acetyllysine; by autocatalysis" evidence="25">
    <location>
        <position position="262"/>
    </location>
</feature>
<feature type="mutagenesis site" description="Strongly reduces HAT activity." evidence="10">
    <original>W</original>
    <variation>A</variation>
    <location>
        <position position="247"/>
    </location>
</feature>
<feature type="mutagenesis site" description="Strongly reduces HAT activity." evidence="10">
    <original>N</original>
    <variation>A</variation>
    <location>
        <position position="250"/>
    </location>
</feature>
<feature type="mutagenesis site" description="Strongly reduces HAT activity." evidence="10">
    <original>L</original>
    <variation>A</variation>
    <location>
        <position position="251"/>
    </location>
</feature>
<feature type="mutagenesis site" description="Strongly reduces HAT activity." evidence="10">
    <original>C</original>
    <variation>A</variation>
    <location>
        <position position="252"/>
    </location>
</feature>
<feature type="mutagenesis site" description="Strongly reduces HAT activity." evidence="10">
    <original>L</original>
    <variation>A</variation>
    <location>
        <position position="253"/>
    </location>
</feature>
<feature type="mutagenesis site" description="Strongly reduces HAT activity." evidence="10">
    <original>L</original>
    <variation>A</variation>
    <location>
        <position position="254"/>
    </location>
</feature>
<feature type="mutagenesis site" description="Strongly reduces HAT activity." evidence="10">
    <original>K</original>
    <variation>A</variation>
    <location>
        <position position="256"/>
    </location>
</feature>
<feature type="mutagenesis site" description="Strongly reduces HAT activity." evidence="10">
    <original>L</original>
    <variation>A</variation>
    <location>
        <position position="259"/>
    </location>
</feature>
<feature type="mutagenesis site" description="Strongly reduces HAT activity." evidence="10">
    <original>D</original>
    <variation>A</variation>
    <location>
        <position position="260"/>
    </location>
</feature>
<feature type="mutagenesis site" description="Strongly reduces HAT activity." evidence="10">
    <original>K</original>
    <variation>A</variation>
    <location>
        <position position="262"/>
    </location>
</feature>
<feature type="mutagenesis site" description="Strongly reduces HAT activity." evidence="25">
    <original>K</original>
    <variation>R</variation>
    <location>
        <position position="262"/>
    </location>
</feature>
<feature type="mutagenesis site" description="Reduces HAT activity." evidence="22">
    <original>C</original>
    <variation>A</variation>
    <location>
        <position position="304"/>
    </location>
</feature>
<feature type="mutagenesis site" description="Strongly reduces HAT activity, but is not lethal (in vivo). Lethal, when associated with Q-338." evidence="12 22 23">
    <original>C</original>
    <variation>S</variation>
    <location>
        <position position="304"/>
    </location>
</feature>
<feature type="mutagenesis site" description="Loss of function." evidence="29">
    <original>G</original>
    <variation>E</variation>
    <location>
        <position position="315"/>
    </location>
</feature>
<feature type="mutagenesis site" description="Strongly reduces HAT activity at pH 9.2. Nearly abolishes HAT activity at pH 8.0, but is not lethal (in vivo). Lethal; when associated with S-334." evidence="12 22 23">
    <original>E</original>
    <variation>Q</variation>
    <location>
        <position position="338"/>
    </location>
</feature>
<feature type="strand" evidence="41">
    <location>
        <begin position="11"/>
        <end position="13"/>
    </location>
</feature>
<feature type="helix" evidence="40">
    <location>
        <begin position="18"/>
        <end position="20"/>
    </location>
</feature>
<feature type="strand" evidence="40">
    <location>
        <begin position="25"/>
        <end position="30"/>
    </location>
</feature>
<feature type="strand" evidence="40">
    <location>
        <begin position="35"/>
        <end position="44"/>
    </location>
</feature>
<feature type="strand" evidence="40">
    <location>
        <begin position="46"/>
        <end position="49"/>
    </location>
</feature>
<feature type="strand" evidence="40">
    <location>
        <begin position="51"/>
        <end position="55"/>
    </location>
</feature>
<feature type="strand" evidence="40">
    <location>
        <begin position="65"/>
        <end position="68"/>
    </location>
</feature>
<feature type="turn" evidence="40">
    <location>
        <begin position="69"/>
        <end position="71"/>
    </location>
</feature>
<feature type="strand" evidence="40">
    <location>
        <begin position="74"/>
        <end position="76"/>
    </location>
</feature>
<feature type="strand" evidence="41">
    <location>
        <begin position="78"/>
        <end position="80"/>
    </location>
</feature>
<feature type="helix" evidence="43">
    <location>
        <begin position="161"/>
        <end position="163"/>
    </location>
</feature>
<feature type="strand" evidence="42">
    <location>
        <begin position="169"/>
        <end position="172"/>
    </location>
</feature>
<feature type="strand" evidence="42">
    <location>
        <begin position="175"/>
        <end position="177"/>
    </location>
</feature>
<feature type="helix" evidence="43">
    <location>
        <begin position="187"/>
        <end position="191"/>
    </location>
</feature>
<feature type="strand" evidence="42">
    <location>
        <begin position="194"/>
        <end position="197"/>
    </location>
</feature>
<feature type="turn" evidence="42">
    <location>
        <begin position="199"/>
        <end position="201"/>
    </location>
</feature>
<feature type="strand" evidence="42">
    <location>
        <begin position="204"/>
        <end position="207"/>
    </location>
</feature>
<feature type="helix" evidence="42">
    <location>
        <begin position="208"/>
        <end position="215"/>
    </location>
</feature>
<feature type="strand" evidence="42">
    <location>
        <begin position="224"/>
        <end position="230"/>
    </location>
</feature>
<feature type="strand" evidence="42">
    <location>
        <begin position="232"/>
        <end position="240"/>
    </location>
</feature>
<feature type="helix" evidence="42">
    <location>
        <begin position="241"/>
        <end position="243"/>
    </location>
</feature>
<feature type="helix" evidence="42">
    <location>
        <begin position="245"/>
        <end position="256"/>
    </location>
</feature>
<feature type="strand" evidence="42">
    <location>
        <begin position="271"/>
        <end position="280"/>
    </location>
</feature>
<feature type="strand" evidence="42">
    <location>
        <begin position="283"/>
        <end position="295"/>
    </location>
</feature>
<feature type="strand" evidence="42">
    <location>
        <begin position="300"/>
        <end position="303"/>
    </location>
</feature>
<feature type="strand" evidence="42">
    <location>
        <begin position="305"/>
        <end position="307"/>
    </location>
</feature>
<feature type="helix" evidence="42">
    <location>
        <begin position="309"/>
        <end position="311"/>
    </location>
</feature>
<feature type="strand" evidence="39">
    <location>
        <begin position="313"/>
        <end position="315"/>
    </location>
</feature>
<feature type="helix" evidence="42">
    <location>
        <begin position="316"/>
        <end position="330"/>
    </location>
</feature>
<feature type="strand" evidence="42">
    <location>
        <begin position="335"/>
        <end position="337"/>
    </location>
</feature>
<feature type="helix" evidence="42">
    <location>
        <begin position="343"/>
        <end position="363"/>
    </location>
</feature>
<feature type="strand" evidence="42">
    <location>
        <begin position="366"/>
        <end position="369"/>
    </location>
</feature>
<feature type="helix" evidence="42">
    <location>
        <begin position="370"/>
        <end position="377"/>
    </location>
</feature>
<feature type="helix" evidence="42">
    <location>
        <begin position="381"/>
        <end position="390"/>
    </location>
</feature>
<feature type="strand" evidence="42">
    <location>
        <begin position="394"/>
        <end position="397"/>
    </location>
</feature>
<feature type="strand" evidence="42">
    <location>
        <begin position="400"/>
        <end position="404"/>
    </location>
</feature>
<feature type="helix" evidence="42">
    <location>
        <begin position="407"/>
        <end position="418"/>
    </location>
</feature>
<feature type="helix" evidence="42">
    <location>
        <begin position="426"/>
        <end position="428"/>
    </location>
</feature>
<feature type="turn" evidence="44">
    <location>
        <begin position="438"/>
        <end position="440"/>
    </location>
</feature>
<reference key="1">
    <citation type="journal article" date="1996" name="Yeast">
        <title>Sequence and analysis of a 26.9 kb fragment from chromosome XV of the yeast Saccharomyces cerevisiae.</title>
        <authorList>
            <person name="Boyer J."/>
            <person name="Michaux G."/>
            <person name="Fairhead C."/>
            <person name="Gaillon L."/>
            <person name="Dujon B."/>
        </authorList>
    </citation>
    <scope>NUCLEOTIDE SEQUENCE [GENOMIC DNA]</scope>
    <source>
        <strain>ATCC 96604 / S288c / FY1679</strain>
    </source>
</reference>
<reference key="2">
    <citation type="journal article" date="1997" name="Nature">
        <title>The nucleotide sequence of Saccharomyces cerevisiae chromosome XV.</title>
        <authorList>
            <person name="Dujon B."/>
            <person name="Albermann K."/>
            <person name="Aldea M."/>
            <person name="Alexandraki D."/>
            <person name="Ansorge W."/>
            <person name="Arino J."/>
            <person name="Benes V."/>
            <person name="Bohn C."/>
            <person name="Bolotin-Fukuhara M."/>
            <person name="Bordonne R."/>
            <person name="Boyer J."/>
            <person name="Camasses A."/>
            <person name="Casamayor A."/>
            <person name="Casas C."/>
            <person name="Cheret G."/>
            <person name="Cziepluch C."/>
            <person name="Daignan-Fornier B."/>
            <person name="Dang V.-D."/>
            <person name="de Haan M."/>
            <person name="Delius H."/>
            <person name="Durand P."/>
            <person name="Fairhead C."/>
            <person name="Feldmann H."/>
            <person name="Gaillon L."/>
            <person name="Galisson F."/>
            <person name="Gamo F.-J."/>
            <person name="Gancedo C."/>
            <person name="Goffeau A."/>
            <person name="Goulding S.E."/>
            <person name="Grivell L.A."/>
            <person name="Habbig B."/>
            <person name="Hand N.J."/>
            <person name="Hani J."/>
            <person name="Hattenhorst U."/>
            <person name="Hebling U."/>
            <person name="Hernando Y."/>
            <person name="Herrero E."/>
            <person name="Heumann K."/>
            <person name="Hiesel R."/>
            <person name="Hilger F."/>
            <person name="Hofmann B."/>
            <person name="Hollenberg C.P."/>
            <person name="Hughes B."/>
            <person name="Jauniaux J.-C."/>
            <person name="Kalogeropoulos A."/>
            <person name="Katsoulou C."/>
            <person name="Kordes E."/>
            <person name="Lafuente M.J."/>
            <person name="Landt O."/>
            <person name="Louis E.J."/>
            <person name="Maarse A.C."/>
            <person name="Madania A."/>
            <person name="Mannhaupt G."/>
            <person name="Marck C."/>
            <person name="Martin R.P."/>
            <person name="Mewes H.-W."/>
            <person name="Michaux G."/>
            <person name="Paces V."/>
            <person name="Parle-McDermott A.G."/>
            <person name="Pearson B.M."/>
            <person name="Perrin A."/>
            <person name="Pettersson B."/>
            <person name="Poch O."/>
            <person name="Pohl T.M."/>
            <person name="Poirey R."/>
            <person name="Portetelle D."/>
            <person name="Pujol A."/>
            <person name="Purnelle B."/>
            <person name="Ramezani Rad M."/>
            <person name="Rechmann S."/>
            <person name="Schwager C."/>
            <person name="Schweizer M."/>
            <person name="Sor F."/>
            <person name="Sterky F."/>
            <person name="Tarassov I.A."/>
            <person name="Teodoru C."/>
            <person name="Tettelin H."/>
            <person name="Thierry A."/>
            <person name="Tobiasch E."/>
            <person name="Tzermia M."/>
            <person name="Uhlen M."/>
            <person name="Unseld M."/>
            <person name="Valens M."/>
            <person name="Vandenbol M."/>
            <person name="Vetter I."/>
            <person name="Vlcek C."/>
            <person name="Voet M."/>
            <person name="Volckaert G."/>
            <person name="Voss H."/>
            <person name="Wambutt R."/>
            <person name="Wedler H."/>
            <person name="Wiemann S."/>
            <person name="Winsor B."/>
            <person name="Wolfe K.H."/>
            <person name="Zollner A."/>
            <person name="Zumstein E."/>
            <person name="Kleine K."/>
        </authorList>
    </citation>
    <scope>NUCLEOTIDE SEQUENCE [LARGE SCALE GENOMIC DNA]</scope>
    <source>
        <strain>ATCC 204508 / S288c</strain>
    </source>
</reference>
<reference key="3">
    <citation type="journal article" date="2014" name="G3 (Bethesda)">
        <title>The reference genome sequence of Saccharomyces cerevisiae: Then and now.</title>
        <authorList>
            <person name="Engel S.R."/>
            <person name="Dietrich F.S."/>
            <person name="Fisk D.G."/>
            <person name="Binkley G."/>
            <person name="Balakrishnan R."/>
            <person name="Costanzo M.C."/>
            <person name="Dwight S.S."/>
            <person name="Hitz B.C."/>
            <person name="Karra K."/>
            <person name="Nash R.S."/>
            <person name="Weng S."/>
            <person name="Wong E.D."/>
            <person name="Lloyd P."/>
            <person name="Skrzypek M.S."/>
            <person name="Miyasato S.R."/>
            <person name="Simison M."/>
            <person name="Cherry J.M."/>
        </authorList>
    </citation>
    <scope>GENOME REANNOTATION</scope>
    <source>
        <strain>ATCC 204508 / S288c</strain>
    </source>
</reference>
<reference key="4">
    <citation type="journal article" date="1998" name="Proc. Natl. Acad. Sci. U.S.A.">
        <title>ESA1 is a histone acetyltransferase that is essential for growth in yeast.</title>
        <authorList>
            <person name="Smith E.R."/>
            <person name="Eisen A."/>
            <person name="Gu W."/>
            <person name="Sattah M."/>
            <person name="Pannuti A."/>
            <person name="Zhou J."/>
            <person name="Cook R.G."/>
            <person name="Lucchesi J.C."/>
            <person name="Allis C.D."/>
        </authorList>
    </citation>
    <scope>FUNCTION</scope>
    <scope>CATALYTIC ACTIVITY</scope>
    <scope>MUTAGENESIS OF GLY-315</scope>
</reference>
<reference key="5">
    <citation type="journal article" date="1999" name="EMBO J.">
        <title>NuA4, an essential transcription adaptor/histone H4 acetyltransferase complex containing Esa1p and the ATM-related cofactor Tra1p.</title>
        <authorList>
            <person name="Allard S."/>
            <person name="Utley R.T."/>
            <person name="Savard J."/>
            <person name="Clarke A.S."/>
            <person name="Grant P.A."/>
            <person name="Brandl C.J."/>
            <person name="Pillus L."/>
            <person name="Workman J.L."/>
            <person name="Cote J."/>
        </authorList>
    </citation>
    <scope>IDENTIFICATION IN A NUA4 COMPLEX WITH TRA1</scope>
</reference>
<reference key="6">
    <citation type="journal article" date="1999" name="Mol. Cell. Biol.">
        <title>Activation domain-specific and general transcription stimulation by native histone acetyltransferase complexes.</title>
        <authorList>
            <person name="Ikeda K."/>
            <person name="Steger D.J."/>
            <person name="Eberharter A."/>
            <person name="Workman J.L."/>
        </authorList>
    </citation>
    <scope>FUNCTION OF THE NUA4 COMPLEX</scope>
</reference>
<reference key="7">
    <citation type="journal article" date="1999" name="Mol. Cell. Biol.">
        <title>Esa1p is an essential histone acetyltransferase required for cell cycle progression.</title>
        <authorList>
            <person name="Clarke A.S."/>
            <person name="Lowell J.E."/>
            <person name="Jacobson S.J."/>
            <person name="Pillus L."/>
        </authorList>
    </citation>
    <scope>FUNCTION</scope>
    <scope>ACETYLATION OF HISTONES H2A; H3 AND H4</scope>
</reference>
<reference key="8">
    <citation type="journal article" date="2000" name="EMBO J.">
        <title>Distribution of acetylated histones resulting from Gal4-VP16 recruitment of SAGA and NuA4 complexes.</title>
        <authorList>
            <person name="Vignali M."/>
            <person name="Steger D.J."/>
            <person name="Neely K.E."/>
            <person name="Workman J.L."/>
        </authorList>
    </citation>
    <scope>FUNCTION OF THE NUA4 COMPLEX</scope>
</reference>
<reference key="9">
    <citation type="journal article" date="2000" name="Mol. Cell">
        <title>Multiple links between the NuA4 histone acetyltransferase complex and epigenetic control of transcription.</title>
        <authorList>
            <person name="Galarneau L."/>
            <person name="Nourani A."/>
            <person name="Boudreault A.A."/>
            <person name="Zhang Y."/>
            <person name="Heliot L."/>
            <person name="Allard S."/>
            <person name="Savard J."/>
            <person name="Lane W.S."/>
            <person name="Stillman D.J."/>
            <person name="Cote J."/>
        </authorList>
    </citation>
    <scope>IDENTIFICATION IN THE NUA4 COMPLEX</scope>
    <scope>FUNCTION OF THE NUA4 COMPLEX</scope>
    <scope>SUBCELLULAR LOCATION</scope>
    <scope>INTERACTION WITH HISTONES H2A; H3 AND H4</scope>
</reference>
<reference key="10">
    <citation type="journal article" date="2000" name="Nature">
        <title>Global histone acetylation and deacetylation in yeast.</title>
        <authorList>
            <person name="Vogelauer M."/>
            <person name="Wu J."/>
            <person name="Suka N."/>
            <person name="Grunstein M."/>
        </authorList>
    </citation>
    <scope>ACETYLATION OF HISTONES H2A AND H4</scope>
</reference>
<reference key="11">
    <citation type="journal article" date="2001" name="Mol. Cell">
        <title>Highly specific antibodies determine histone acetylation site usage in yeast heterochromatin and euchromatin.</title>
        <authorList>
            <person name="Suka N."/>
            <person name="Suka Y."/>
            <person name="Carmen A.A."/>
            <person name="Wu J."/>
            <person name="Grunstein M."/>
        </authorList>
    </citation>
    <scope>ACETYLATION OF HISTONES H2A; H2B AND H4</scope>
</reference>
<reference key="12">
    <citation type="journal article" date="2002" name="J. Biol. Chem.">
        <title>A conserved motif common to the histone acetyltransferase Esa1 and the histone deacetylase Rpd3.</title>
        <authorList>
            <person name="Adachi N."/>
            <person name="Kimura A."/>
            <person name="Horikoshi M."/>
        </authorList>
    </citation>
    <scope>DOMAIN</scope>
    <scope>MUTAGENESIS OF TRP-247; ASN-250; LEU-251; CYS-252; LEU-253; LEU-254; LYS-256; LEU-259; ASP-260 AND LYS-262</scope>
</reference>
<reference key="13">
    <citation type="journal article" date="2002" name="Nature">
        <title>Acetylation of histone H4 by Esa1 is required for DNA double-strand break repair.</title>
        <authorList>
            <person name="Bird A.W."/>
            <person name="Yu D.Y."/>
            <person name="Pray-Grant M.G."/>
            <person name="Qiu Q."/>
            <person name="Harmon K.E."/>
            <person name="Megee P.C."/>
            <person name="Grant P.A."/>
            <person name="Smith M.M."/>
            <person name="Christman M.F."/>
        </authorList>
    </citation>
    <scope>FUNCTION</scope>
</reference>
<reference key="14">
    <citation type="journal article" date="2002" name="Nat. Genet.">
        <title>Sir2p and Sas2p opposingly regulate acetylation of yeast histone H4 lysine 16 and spreading of heterochromatin.</title>
        <authorList>
            <person name="Suka N."/>
            <person name="Luo K."/>
            <person name="Grunstein M."/>
        </authorList>
    </citation>
    <scope>FUNCTION IN ACETYLATION OF HISTONE H4</scope>
</reference>
<reference key="15">
    <citation type="journal article" date="2003" name="Mol. Cell">
        <title>Assigning function to yeast proteins by integration of technologies.</title>
        <authorList>
            <person name="Hazbun T.R."/>
            <person name="Malmstroem L."/>
            <person name="Anderson S."/>
            <person name="Graczyk B.J."/>
            <person name="Fox B."/>
            <person name="Riffle M."/>
            <person name="Sundin B.A."/>
            <person name="Aranda J.D."/>
            <person name="McDonald W.H."/>
            <person name="Chiu C.-H."/>
            <person name="Snydsman B.E."/>
            <person name="Bradley P."/>
            <person name="Muller E.G.D."/>
            <person name="Fields S."/>
            <person name="Baker D."/>
            <person name="Yates J.R. III"/>
            <person name="Davis T.N."/>
        </authorList>
    </citation>
    <scope>IDENTIFICATION BY MASS SPECTROMETRY</scope>
</reference>
<reference key="16">
    <citation type="journal article" date="2003" name="Nature">
        <title>Global analysis of protein expression in yeast.</title>
        <authorList>
            <person name="Ghaemmaghami S."/>
            <person name="Huh W.-K."/>
            <person name="Bower K."/>
            <person name="Howson R.W."/>
            <person name="Belle A."/>
            <person name="Dephoure N."/>
            <person name="O'Shea E.K."/>
            <person name="Weissman J.S."/>
        </authorList>
    </citation>
    <scope>LEVEL OF PROTEIN EXPRESSION [LARGE SCALE ANALYSIS]</scope>
</reference>
<reference key="17">
    <citation type="journal article" date="2004" name="EMBO J.">
        <title>Recruitment of the NuA4 complex poises the PHO5 promoter for chromatin remodeling and activation.</title>
        <authorList>
            <person name="Nourani A."/>
            <person name="Utley R.T."/>
            <person name="Allard S."/>
            <person name="Cote J."/>
        </authorList>
    </citation>
    <scope>FUNCTION OF THE NUA4 COMPLEX</scope>
</reference>
<reference key="18">
    <citation type="journal article" date="2004" name="Mol. Cell">
        <title>Global position and recruitment of HATs and HDACs in the yeast genome.</title>
        <authorList>
            <person name="Robert F."/>
            <person name="Pokholok D.K."/>
            <person name="Hannett N.M."/>
            <person name="Rinaldi N.J."/>
            <person name="Chandy M."/>
            <person name="Rolfe A."/>
            <person name="Workman J.L."/>
            <person name="Gifford D.K."/>
            <person name="Young R.A."/>
        </authorList>
    </citation>
    <scope>FUNCTION</scope>
</reference>
<reference key="19">
    <citation type="journal article" date="2004" name="PLoS Biol.">
        <title>A protein complex containing the conserved Swi2/Snf2-related ATPase Swr1p deposits histone variant H2A.Z into euchromatin.</title>
        <authorList>
            <person name="Kobor M.S."/>
            <person name="Venkatasubrahmanyam S."/>
            <person name="Meneghini M.D."/>
            <person name="Gin J.W."/>
            <person name="Jennings J.L."/>
            <person name="Link A.J."/>
            <person name="Madhani H.D."/>
            <person name="Rine J."/>
        </authorList>
    </citation>
    <scope>FUNCTION</scope>
    <scope>IDENTIFICATION IN THE NUA4 COMPLEX</scope>
    <scope>IDENTIFICATION BY MASS SPECTROMETRY</scope>
</reference>
<reference key="20">
    <citation type="journal article" date="2004" name="Proc. Natl. Acad. Sci. U.S.A.">
        <title>Regulation of chromosome stability by the histone H2A variant Htz1, the Swr1 chromatin remodeling complex, and the histone acetyltransferase NuA4.</title>
        <authorList>
            <person name="Krogan N.J."/>
            <person name="Baetz K."/>
            <person name="Keogh M.-C."/>
            <person name="Datta N."/>
            <person name="Sawa C."/>
            <person name="Kwok T.C.Y."/>
            <person name="Thompson N.J."/>
            <person name="Davey M.G."/>
            <person name="Pootoolal J."/>
            <person name="Hughes T.R."/>
            <person name="Emili A."/>
            <person name="Buratowski S."/>
            <person name="Hieter P."/>
            <person name="Greenblatt J.F."/>
        </authorList>
    </citation>
    <scope>IDENTIFICATION IN THE NUA4 COMPLEX</scope>
    <scope>IDENTIFICATION BY MASS SPECTROMETRY</scope>
</reference>
<reference key="21">
    <citation type="journal article" date="2005" name="Mol. Cell">
        <title>Dynamic lysine methylation on histone H3 defines the regulatory phase of gene transcription.</title>
        <authorList>
            <person name="Morillon A."/>
            <person name="Karabetsou N."/>
            <person name="Nair A."/>
            <person name="Mellor J."/>
        </authorList>
    </citation>
    <scope>REGULATION BY HISTONE H3 METHYLATION</scope>
</reference>
<reference key="22">
    <citation type="journal article" date="2005" name="Mol. Cell. Biol.">
        <title>Localized histone acetylation and deacetylation triggered by the homologous recombination pathway of double-strand DNA repair.</title>
        <authorList>
            <person name="Tamburini B.A."/>
            <person name="Tyler J.K."/>
        </authorList>
    </citation>
    <scope>FUNCTION</scope>
</reference>
<reference key="23">
    <citation type="journal article" date="2005" name="Mol. Cell. Biol.">
        <title>The Saccharomyces cerevisiae Piccolo NuA4 histone acetyltransferase complex requires the Enhancer of Polycomb A domain and chromodomain to acetylate nucleosomes.</title>
        <authorList>
            <person name="Selleck W."/>
            <person name="Fortin I."/>
            <person name="Sermwittayawong D."/>
            <person name="Cote J."/>
            <person name="Tan S."/>
        </authorList>
    </citation>
    <scope>DOMAIN</scope>
</reference>
<reference key="24">
    <citation type="journal article" date="2008" name="Mol. Cell. Proteomics">
        <title>A multidimensional chromatography technology for in-depth phosphoproteome analysis.</title>
        <authorList>
            <person name="Albuquerque C.P."/>
            <person name="Smolka M.B."/>
            <person name="Payne S.H."/>
            <person name="Bafna V."/>
            <person name="Eng J."/>
            <person name="Zhou H."/>
        </authorList>
    </citation>
    <scope>PHOSPHORYLATION [LARGE SCALE ANALYSIS] AT SER-17</scope>
    <scope>IDENTIFICATION BY MASS SPECTROMETRY [LARGE SCALE ANALYSIS]</scope>
</reference>
<reference key="25">
    <citation type="journal article" date="2006" name="Genes Dev.">
        <title>Acetylation of H2AZ Lys 14 is associated with genome-wide gene activity in yeast.</title>
        <authorList>
            <person name="Millar C.B."/>
            <person name="Xu F."/>
            <person name="Zhang K."/>
            <person name="Grunstein M."/>
        </authorList>
    </citation>
    <scope>FUNCTION IN ACETYLATION OF HISTONE H2A VARIANT HTZ1</scope>
</reference>
<reference key="26">
    <citation type="journal article" date="2007" name="Biochemistry">
        <title>Catalytic mechanism of a MYST family histone acetyltransferase.</title>
        <authorList>
            <person name="Berndsen C.E."/>
            <person name="Albaugh B.N."/>
            <person name="Tan S."/>
            <person name="Denu J.M."/>
        </authorList>
    </citation>
    <scope>CATALYTIC ACTIVITY</scope>
    <scope>MUTAGENESIS OF CYS-304 AND GLU-338</scope>
    <scope>ACTIVE SITE</scope>
</reference>
<reference key="27">
    <citation type="journal article" date="2008" name="Genetics">
        <title>Catalytic-site mutations in the MYST family histone Acetyltransferase Esa1.</title>
        <authorList>
            <person name="Decker P.V."/>
            <person name="Yu D.Y."/>
            <person name="Iizuka M."/>
            <person name="Qiu Q."/>
            <person name="Smith M.M."/>
        </authorList>
    </citation>
    <scope>FUNCTION</scope>
    <scope>MUTAGENESIS OF CYS-304 AND GLU-338</scope>
    <scope>CATALYTIC ACTIVITY</scope>
    <scope>ACTIVE SITE</scope>
</reference>
<reference key="28">
    <citation type="journal article" date="2009" name="Mol. Cell. Biol.">
        <title>NuA4 lysine acetyltransferase Esa1 is targeted to coding regions and stimulates transcription elongation with Gcn5.</title>
        <authorList>
            <person name="Ginsburg D.S."/>
            <person name="Govind C.K."/>
            <person name="Hinnebusch A.G."/>
        </authorList>
    </citation>
    <scope>FUNCTION</scope>
</reference>
<reference key="29">
    <citation type="journal article" date="2012" name="Science">
        <title>Function and molecular mechanism of acetylation in autophagy regulation.</title>
        <authorList>
            <person name="Yi C."/>
            <person name="Ma M."/>
            <person name="Ran L."/>
            <person name="Zheng J."/>
            <person name="Tong J."/>
            <person name="Zhu J."/>
            <person name="Ma C."/>
            <person name="Sun Y."/>
            <person name="Zhang S."/>
            <person name="Feng W."/>
            <person name="Zhu L."/>
            <person name="Le Y."/>
            <person name="Gong X."/>
            <person name="Yan X."/>
            <person name="Hong B."/>
            <person name="Jiang F.J."/>
            <person name="Xie Z."/>
            <person name="Miao D."/>
            <person name="Deng H."/>
            <person name="Yu L."/>
        </authorList>
    </citation>
    <scope>FUNCTION</scope>
    <scope>CATALYTIC ACTIVITY</scope>
</reference>
<reference key="30">
    <citation type="journal article" date="2018" name="Nat. Commun.">
        <title>Tip60-mediated lipin 1 acetylation and ER translocation determine triacylglycerol synthesis rate.</title>
        <authorList>
            <person name="Li T.Y."/>
            <person name="Song L."/>
            <person name="Sun Y."/>
            <person name="Li J."/>
            <person name="Yi C."/>
            <person name="Lam S.M."/>
            <person name="Xu D."/>
            <person name="Zhou L."/>
            <person name="Li X."/>
            <person name="Yang Y."/>
            <person name="Zhang C.S."/>
            <person name="Xie C."/>
            <person name="Huang X."/>
            <person name="Shui G."/>
            <person name="Lin S.Y."/>
            <person name="Reue K."/>
            <person name="Lin S.C."/>
        </authorList>
    </citation>
    <scope>FUNCTION</scope>
    <scope>CATALYTIC ACTIVITY</scope>
</reference>
<reference key="31">
    <citation type="journal article" date="2019" name="J. Biol. Chem.">
        <title>Gcn5 and Esa1 function as histone crotonyltransferases to regulate crotonylation-dependent transcription.</title>
        <authorList>
            <person name="Kollenstart L."/>
            <person name="de Groot A.J.L."/>
            <person name="Janssen G.M.C."/>
            <person name="Cheng X."/>
            <person name="Vreeken K."/>
            <person name="Martino F."/>
            <person name="Cote J."/>
            <person name="van Veelen P.A."/>
            <person name="van Attikum H."/>
        </authorList>
    </citation>
    <scope>FUNCTION</scope>
    <scope>CATALYTIC ACTIVITY</scope>
</reference>
<reference key="32">
    <citation type="journal article" date="2000" name="Mol. Cell">
        <title>Crystal structure of yeast Esa1 suggests a unified mechanism for catalysis and substrate binding by histone acetyltransferases.</title>
        <authorList>
            <person name="Yan Y."/>
            <person name="Barlev N.A."/>
            <person name="Haley R.H."/>
            <person name="Berger S.L."/>
            <person name="Marmorstein R."/>
        </authorList>
    </citation>
    <scope>X-RAY CRYSTALLOGRAPHY (2.00 ANGSTROMS) OF 160-435 IN COMPLEX WITH COENZYME A</scope>
</reference>
<reference key="33">
    <citation type="journal article" date="2002" name="Nat. Struct. Biol.">
        <title>The catalytic mechanism of the ESA1 histone acetyltransferase involves a self-acetylated intermediate.</title>
        <authorList>
            <person name="Yan Y."/>
            <person name="Harper S."/>
            <person name="Speicher D.W."/>
            <person name="Marmorstein R."/>
        </authorList>
    </citation>
    <scope>X-RAY CRYSTALLOGRAPHY (2.26 ANGSTROMS) OF 162-435 OF MUTANTS GLN-338 AND CYS-304 IN COMPLEX WITH ACETYL-COA</scope>
    <scope>CATALYTIC ACTIVITY</scope>
    <scope>ACTIVE SITE</scope>
    <scope>MUTAGENESIS OF CYS-304 AND GLU-338</scope>
</reference>
<reference key="34">
    <citation type="journal article" date="2012" name="EMBO J.">
        <title>MYST protein acetyltransferase activity requires active site lysine autoacetylation.</title>
        <authorList>
            <person name="Yuan H."/>
            <person name="Rossetto D."/>
            <person name="Mellert H."/>
            <person name="Dang W."/>
            <person name="Srinivasan M."/>
            <person name="Johnson J."/>
            <person name="Hodawadekar S."/>
            <person name="Ding E.C."/>
            <person name="Speicher K."/>
            <person name="Abshiru N."/>
            <person name="Perry R."/>
            <person name="Wu J."/>
            <person name="Yang C."/>
            <person name="Zheng Y.G."/>
            <person name="Speicher D.W."/>
            <person name="Thibault P."/>
            <person name="Verreault A."/>
            <person name="Johnson F.B."/>
            <person name="Berger S.L."/>
            <person name="Sternglanz R."/>
            <person name="McMahon S.B."/>
            <person name="Cote J."/>
            <person name="Marmorstein R."/>
        </authorList>
    </citation>
    <scope>X-RAY CRYSTALLOGRAPHY (1.9 ANGSTROMS) OF 160-435 IN COMPLEXES WITH ACETYL-COA ANALOGS</scope>
    <scope>CATALYTIC ACTIVITY</scope>
    <scope>ACTIVE SITE</scope>
    <scope>ACETYLATION AT LYS-262</scope>
    <scope>MUTAGENESIS OF LYS-262</scope>
</reference>
<protein>
    <recommendedName>
        <fullName evidence="36">Histone acetyltransferase ESA1</fullName>
        <ecNumber evidence="12 22 23 25 29">2.3.1.48</ecNumber>
    </recommendedName>
    <alternativeName>
        <fullName evidence="36">Protein 2-hydroxyisobutyryltransferase ESA1</fullName>
        <ecNumber evidence="1">2.3.1.-</ecNumber>
    </alternativeName>
    <alternativeName>
        <fullName evidence="36">Protein acetyltransferase ESA1</fullName>
        <ecNumber evidence="26 27">2.3.1.-</ecNumber>
    </alternativeName>
    <alternativeName>
        <fullName evidence="36">Protein crotonyltransferase ESA1</fullName>
        <ecNumber evidence="28">2.3.1.-</ecNumber>
    </alternativeName>
</protein>
<evidence type="ECO:0000250" key="1">
    <source>
        <dbReference type="UniProtKB" id="O94446"/>
    </source>
</evidence>
<evidence type="ECO:0000255" key="2"/>
<evidence type="ECO:0000255" key="3">
    <source>
        <dbReference type="PROSITE-ProRule" id="PRU01063"/>
    </source>
</evidence>
<evidence type="ECO:0000256" key="4">
    <source>
        <dbReference type="SAM" id="MobiDB-lite"/>
    </source>
</evidence>
<evidence type="ECO:0000269" key="5">
    <source>
    </source>
</evidence>
<evidence type="ECO:0000269" key="6">
    <source>
    </source>
</evidence>
<evidence type="ECO:0000269" key="7">
    <source>
    </source>
</evidence>
<evidence type="ECO:0000269" key="8">
    <source>
    </source>
</evidence>
<evidence type="ECO:0000269" key="9">
    <source>
    </source>
</evidence>
<evidence type="ECO:0000269" key="10">
    <source>
    </source>
</evidence>
<evidence type="ECO:0000269" key="11">
    <source>
    </source>
</evidence>
<evidence type="ECO:0000269" key="12">
    <source>
    </source>
</evidence>
<evidence type="ECO:0000269" key="13">
    <source>
    </source>
</evidence>
<evidence type="ECO:0000269" key="14">
    <source>
    </source>
</evidence>
<evidence type="ECO:0000269" key="15">
    <source>
    </source>
</evidence>
<evidence type="ECO:0000269" key="16">
    <source>
    </source>
</evidence>
<evidence type="ECO:0000269" key="17">
    <source>
    </source>
</evidence>
<evidence type="ECO:0000269" key="18">
    <source>
    </source>
</evidence>
<evidence type="ECO:0000269" key="19">
    <source>
    </source>
</evidence>
<evidence type="ECO:0000269" key="20">
    <source>
    </source>
</evidence>
<evidence type="ECO:0000269" key="21">
    <source>
    </source>
</evidence>
<evidence type="ECO:0000269" key="22">
    <source>
    </source>
</evidence>
<evidence type="ECO:0000269" key="23">
    <source>
    </source>
</evidence>
<evidence type="ECO:0000269" key="24">
    <source>
    </source>
</evidence>
<evidence type="ECO:0000269" key="25">
    <source>
    </source>
</evidence>
<evidence type="ECO:0000269" key="26">
    <source>
    </source>
</evidence>
<evidence type="ECO:0000269" key="27">
    <source>
    </source>
</evidence>
<evidence type="ECO:0000269" key="28">
    <source>
    </source>
</evidence>
<evidence type="ECO:0000269" key="29">
    <source>
    </source>
</evidence>
<evidence type="ECO:0000269" key="30">
    <source>
    </source>
</evidence>
<evidence type="ECO:0000303" key="31">
    <source>
    </source>
</evidence>
<evidence type="ECO:0000303" key="32">
    <source>
    </source>
</evidence>
<evidence type="ECO:0000303" key="33">
    <source>
    </source>
</evidence>
<evidence type="ECO:0000303" key="34">
    <source>
    </source>
</evidence>
<evidence type="ECO:0000303" key="35">
    <source>
    </source>
</evidence>
<evidence type="ECO:0000305" key="36"/>
<evidence type="ECO:0000312" key="37">
    <source>
        <dbReference type="SGD" id="S000005770"/>
    </source>
</evidence>
<evidence type="ECO:0007744" key="38">
    <source>
    </source>
</evidence>
<evidence type="ECO:0007829" key="39">
    <source>
        <dbReference type="PDB" id="1FY7"/>
    </source>
</evidence>
<evidence type="ECO:0007829" key="40">
    <source>
        <dbReference type="PDB" id="2RNZ"/>
    </source>
</evidence>
<evidence type="ECO:0007829" key="41">
    <source>
        <dbReference type="PDB" id="2RO0"/>
    </source>
</evidence>
<evidence type="ECO:0007829" key="42">
    <source>
        <dbReference type="PDB" id="3TO7"/>
    </source>
</evidence>
<evidence type="ECO:0007829" key="43">
    <source>
        <dbReference type="PDB" id="5J9T"/>
    </source>
</evidence>
<evidence type="ECO:0007829" key="44">
    <source>
        <dbReference type="PDB" id="5J9U"/>
    </source>
</evidence>
<gene>
    <name evidence="35 37" type="primary">ESA1</name>
    <name type="ordered locus">YOR244W</name>
    <name type="ORF">O5257</name>
</gene>